<accession>Q71YC4</accession>
<proteinExistence type="inferred from homology"/>
<reference key="1">
    <citation type="journal article" date="2004" name="Nucleic Acids Res.">
        <title>Whole genome comparisons of serotype 4b and 1/2a strains of the food-borne pathogen Listeria monocytogenes reveal new insights into the core genome components of this species.</title>
        <authorList>
            <person name="Nelson K.E."/>
            <person name="Fouts D.E."/>
            <person name="Mongodin E.F."/>
            <person name="Ravel J."/>
            <person name="DeBoy R.T."/>
            <person name="Kolonay J.F."/>
            <person name="Rasko D.A."/>
            <person name="Angiuoli S.V."/>
            <person name="Gill S.R."/>
            <person name="Paulsen I.T."/>
            <person name="Peterson J.D."/>
            <person name="White O."/>
            <person name="Nelson W.C."/>
            <person name="Nierman W.C."/>
            <person name="Beanan M.J."/>
            <person name="Brinkac L.M."/>
            <person name="Daugherty S.C."/>
            <person name="Dodson R.J."/>
            <person name="Durkin A.S."/>
            <person name="Madupu R."/>
            <person name="Haft D.H."/>
            <person name="Selengut J."/>
            <person name="Van Aken S.E."/>
            <person name="Khouri H.M."/>
            <person name="Fedorova N."/>
            <person name="Forberger H.A."/>
            <person name="Tran B."/>
            <person name="Kathariou S."/>
            <person name="Wonderling L.D."/>
            <person name="Uhlich G.A."/>
            <person name="Bayles D.O."/>
            <person name="Luchansky J.B."/>
            <person name="Fraser C.M."/>
        </authorList>
    </citation>
    <scope>NUCLEOTIDE SEQUENCE [LARGE SCALE GENOMIC DNA]</scope>
    <source>
        <strain>F2365</strain>
    </source>
</reference>
<feature type="chain" id="PRO_0000212300" description="Holliday junction resolvase RecU">
    <location>
        <begin position="1"/>
        <end position="201"/>
    </location>
</feature>
<feature type="binding site" evidence="1">
    <location>
        <position position="87"/>
    </location>
    <ligand>
        <name>Mg(2+)</name>
        <dbReference type="ChEBI" id="CHEBI:18420"/>
    </ligand>
</feature>
<feature type="binding site" evidence="1">
    <location>
        <position position="89"/>
    </location>
    <ligand>
        <name>Mg(2+)</name>
        <dbReference type="ChEBI" id="CHEBI:18420"/>
    </ligand>
</feature>
<feature type="binding site" evidence="1">
    <location>
        <position position="102"/>
    </location>
    <ligand>
        <name>Mg(2+)</name>
        <dbReference type="ChEBI" id="CHEBI:18420"/>
    </ligand>
</feature>
<feature type="binding site" evidence="1">
    <location>
        <position position="121"/>
    </location>
    <ligand>
        <name>Mg(2+)</name>
        <dbReference type="ChEBI" id="CHEBI:18420"/>
    </ligand>
</feature>
<feature type="site" description="Transition state stabilizer" evidence="1">
    <location>
        <position position="104"/>
    </location>
</feature>
<organism>
    <name type="scientific">Listeria monocytogenes serotype 4b (strain F2365)</name>
    <dbReference type="NCBI Taxonomy" id="265669"/>
    <lineage>
        <taxon>Bacteria</taxon>
        <taxon>Bacillati</taxon>
        <taxon>Bacillota</taxon>
        <taxon>Bacilli</taxon>
        <taxon>Bacillales</taxon>
        <taxon>Listeriaceae</taxon>
        <taxon>Listeria</taxon>
    </lineage>
</organism>
<protein>
    <recommendedName>
        <fullName evidence="1">Holliday junction resolvase RecU</fullName>
        <ecNumber evidence="1">3.1.21.10</ecNumber>
    </recommendedName>
    <alternativeName>
        <fullName evidence="1">Recombination protein U homolog</fullName>
    </alternativeName>
</protein>
<gene>
    <name evidence="1" type="primary">recU</name>
    <name type="ordered locus">LMOf2365_1920</name>
</gene>
<keyword id="KW-0963">Cytoplasm</keyword>
<keyword id="KW-0227">DNA damage</keyword>
<keyword id="KW-0233">DNA recombination</keyword>
<keyword id="KW-0234">DNA repair</keyword>
<keyword id="KW-0255">Endonuclease</keyword>
<keyword id="KW-0378">Hydrolase</keyword>
<keyword id="KW-0460">Magnesium</keyword>
<keyword id="KW-0479">Metal-binding</keyword>
<keyword id="KW-0540">Nuclease</keyword>
<sequence length="201" mass="23083">MAIGYPNGKKYAASHEVLPQQKRKAPVTYGKRGMSLEDDLNDTIAYYLTHEIAVIHKKPTPVQIVSVDYPKRSSAKIKEAYFKTPSTTDYNGVYKGKYVDFEAKETQNTTSFPLSNFHDHQMTHMANVLKQDGIVFVIIAFQKLGETHFIPFEKFYPFWERMQSGGRKSVTIAEIQDVSDQIPYGLNPRLDFLQSIDKLYF</sequence>
<dbReference type="EC" id="3.1.21.10" evidence="1"/>
<dbReference type="EMBL" id="AE017262">
    <property type="protein sequence ID" value="AAT04690.1"/>
    <property type="molecule type" value="Genomic_DNA"/>
</dbReference>
<dbReference type="RefSeq" id="WP_003723001.1">
    <property type="nucleotide sequence ID" value="NC_002973.6"/>
</dbReference>
<dbReference type="SMR" id="Q71YC4"/>
<dbReference type="KEGG" id="lmf:LMOf2365_1920"/>
<dbReference type="HOGENOM" id="CLU_096340_0_0_9"/>
<dbReference type="GO" id="GO:0005737">
    <property type="term" value="C:cytoplasm"/>
    <property type="evidence" value="ECO:0007669"/>
    <property type="project" value="UniProtKB-SubCell"/>
</dbReference>
<dbReference type="GO" id="GO:0004519">
    <property type="term" value="F:endonuclease activity"/>
    <property type="evidence" value="ECO:0007669"/>
    <property type="project" value="UniProtKB-UniRule"/>
</dbReference>
<dbReference type="GO" id="GO:0000287">
    <property type="term" value="F:magnesium ion binding"/>
    <property type="evidence" value="ECO:0007669"/>
    <property type="project" value="UniProtKB-UniRule"/>
</dbReference>
<dbReference type="GO" id="GO:0003676">
    <property type="term" value="F:nucleic acid binding"/>
    <property type="evidence" value="ECO:0007669"/>
    <property type="project" value="InterPro"/>
</dbReference>
<dbReference type="GO" id="GO:0007059">
    <property type="term" value="P:chromosome segregation"/>
    <property type="evidence" value="ECO:0007669"/>
    <property type="project" value="UniProtKB-UniRule"/>
</dbReference>
<dbReference type="GO" id="GO:0006310">
    <property type="term" value="P:DNA recombination"/>
    <property type="evidence" value="ECO:0007669"/>
    <property type="project" value="UniProtKB-UniRule"/>
</dbReference>
<dbReference type="GO" id="GO:0006281">
    <property type="term" value="P:DNA repair"/>
    <property type="evidence" value="ECO:0007669"/>
    <property type="project" value="UniProtKB-UniRule"/>
</dbReference>
<dbReference type="CDD" id="cd22354">
    <property type="entry name" value="RecU-like"/>
    <property type="match status" value="1"/>
</dbReference>
<dbReference type="Gene3D" id="3.40.1350.10">
    <property type="match status" value="1"/>
</dbReference>
<dbReference type="HAMAP" id="MF_00130">
    <property type="entry name" value="RecU"/>
    <property type="match status" value="1"/>
</dbReference>
<dbReference type="InterPro" id="IPR004612">
    <property type="entry name" value="Resolv_RecU"/>
</dbReference>
<dbReference type="InterPro" id="IPR011335">
    <property type="entry name" value="Restrct_endonuc-II-like"/>
</dbReference>
<dbReference type="InterPro" id="IPR011856">
    <property type="entry name" value="tRNA_endonuc-like_dom_sf"/>
</dbReference>
<dbReference type="NCBIfam" id="NF002582">
    <property type="entry name" value="PRK02234.1-3"/>
    <property type="match status" value="1"/>
</dbReference>
<dbReference type="NCBIfam" id="NF002584">
    <property type="entry name" value="PRK02234.1-5"/>
    <property type="match status" value="1"/>
</dbReference>
<dbReference type="NCBIfam" id="TIGR00648">
    <property type="entry name" value="recU"/>
    <property type="match status" value="1"/>
</dbReference>
<dbReference type="Pfam" id="PF03838">
    <property type="entry name" value="RecU"/>
    <property type="match status" value="1"/>
</dbReference>
<dbReference type="PIRSF" id="PIRSF037785">
    <property type="entry name" value="RecU"/>
    <property type="match status" value="1"/>
</dbReference>
<dbReference type="SUPFAM" id="SSF52980">
    <property type="entry name" value="Restriction endonuclease-like"/>
    <property type="match status" value="1"/>
</dbReference>
<name>RECU_LISMF</name>
<comment type="function">
    <text evidence="1">Endonuclease that resolves Holliday junction intermediates in genetic recombination. Cleaves mobile four-strand junctions by introducing symmetrical nicks in paired strands. Promotes annealing of linear ssDNA with homologous dsDNA. Required for DNA repair, homologous recombination and chromosome segregation.</text>
</comment>
<comment type="catalytic activity">
    <reaction evidence="1">
        <text>Endonucleolytic cleavage at a junction such as a reciprocal single-stranded crossover between two homologous DNA duplexes (Holliday junction).</text>
        <dbReference type="EC" id="3.1.21.10"/>
    </reaction>
</comment>
<comment type="cofactor">
    <cofactor evidence="1">
        <name>Mg(2+)</name>
        <dbReference type="ChEBI" id="CHEBI:18420"/>
    </cofactor>
    <text evidence="1">Binds 1 Mg(2+) ion per subunit.</text>
</comment>
<comment type="subcellular location">
    <subcellularLocation>
        <location evidence="1">Cytoplasm</location>
    </subcellularLocation>
</comment>
<comment type="similarity">
    <text evidence="1">Belongs to the RecU family.</text>
</comment>
<evidence type="ECO:0000255" key="1">
    <source>
        <dbReference type="HAMAP-Rule" id="MF_00130"/>
    </source>
</evidence>